<dbReference type="EC" id="4.2.3.-" evidence="2 3"/>
<dbReference type="EMBL" id="AACS02000009">
    <property type="protein sequence ID" value="EAU89298.1"/>
    <property type="molecule type" value="Genomic_DNA"/>
</dbReference>
<dbReference type="RefSeq" id="XP_001832549.1">
    <property type="nucleotide sequence ID" value="XM_001832497.1"/>
</dbReference>
<dbReference type="SMR" id="A8NCK5"/>
<dbReference type="STRING" id="240176.A8NCK5"/>
<dbReference type="GeneID" id="6009036"/>
<dbReference type="KEGG" id="cci:CC1G_03563"/>
<dbReference type="VEuPathDB" id="FungiDB:CC1G_03563"/>
<dbReference type="eggNOG" id="ENOG502SQ3X">
    <property type="taxonomic scope" value="Eukaryota"/>
</dbReference>
<dbReference type="InParanoid" id="A8NCK5"/>
<dbReference type="OMA" id="HPLEYQV"/>
<dbReference type="OrthoDB" id="2998174at2759"/>
<dbReference type="SABIO-RK" id="A8NCK5"/>
<dbReference type="Proteomes" id="UP000001861">
    <property type="component" value="Unassembled WGS sequence"/>
</dbReference>
<dbReference type="GO" id="GO:0016838">
    <property type="term" value="F:carbon-oxygen lyase activity, acting on phosphates"/>
    <property type="evidence" value="ECO:0007669"/>
    <property type="project" value="InterPro"/>
</dbReference>
<dbReference type="GO" id="GO:0046872">
    <property type="term" value="F:metal ion binding"/>
    <property type="evidence" value="ECO:0007669"/>
    <property type="project" value="UniProtKB-KW"/>
</dbReference>
<dbReference type="Gene3D" id="1.10.600.10">
    <property type="entry name" value="Farnesyl Diphosphate Synthase"/>
    <property type="match status" value="1"/>
</dbReference>
<dbReference type="InterPro" id="IPR008949">
    <property type="entry name" value="Isoprenoid_synthase_dom_sf"/>
</dbReference>
<dbReference type="InterPro" id="IPR024652">
    <property type="entry name" value="Trichodiene_synth"/>
</dbReference>
<dbReference type="Pfam" id="PF06330">
    <property type="entry name" value="TRI5"/>
    <property type="match status" value="1"/>
</dbReference>
<dbReference type="SFLD" id="SFLDS00005">
    <property type="entry name" value="Isoprenoid_Synthase_Type_I"/>
    <property type="match status" value="1"/>
</dbReference>
<dbReference type="SFLD" id="SFLDG01021">
    <property type="entry name" value="Trichodiene_Synthase_Like"/>
    <property type="match status" value="1"/>
</dbReference>
<dbReference type="SUPFAM" id="SSF48576">
    <property type="entry name" value="Terpenoid synthases"/>
    <property type="match status" value="1"/>
</dbReference>
<keyword id="KW-0456">Lyase</keyword>
<keyword id="KW-0460">Magnesium</keyword>
<keyword id="KW-0479">Metal-binding</keyword>
<keyword id="KW-1185">Reference proteome</keyword>
<gene>
    <name evidence="4" type="primary">COP6</name>
    <name type="ORF">CC1G_03563</name>
</gene>
<evidence type="ECO:0000250" key="1">
    <source>
        <dbReference type="UniProtKB" id="P13513"/>
    </source>
</evidence>
<evidence type="ECO:0000269" key="2">
    <source>
    </source>
</evidence>
<evidence type="ECO:0000269" key="3">
    <source>
    </source>
</evidence>
<evidence type="ECO:0000303" key="4">
    <source>
    </source>
</evidence>
<evidence type="ECO:0000305" key="5"/>
<comment type="function">
    <text evidence="2 3">Alpha-cuprenene synthase; part of the gene cluster that mediates the biosynthesis of alpha-cuprenene and oxidized derivatives (PubMed:19400802). The alpha-cuprenene synthase COP6 is the only sesquiterpene synthase identified in C.cinereus that appears to be part of a biosynthetic gene cluster and is highly specific since it catalyzes the cyclization of (2E,6E)-farnesyl diphosphate into only one product, alpha-cuprenene (PubMed:19400802, PubMed:20419721). COP6 is also able to perform the cyclization of geranyl diphosphate (PubMed:20419721). The cytochrome P450 monooxygenase COX2 then oxidizes the cyclohexadiene ring of alpha-cuprenene at positions 1 and 4, yielding first alpha-cuparene, followed by alpha-cuparophenol and a further yet unidentified compound resulting from one additional oxidation step (PubMed:19400802). The cytochrome P450 monooxygenase COX1 then likely catalyzes the oxidation at position 9 of the pentane ring of alpha-cuprenene to give the corresponding hydroxy or ketone derivatives (PubMed:19400802).</text>
</comment>
<comment type="cofactor">
    <cofactor evidence="1">
        <name>Mg(2+)</name>
        <dbReference type="ChEBI" id="CHEBI:18420"/>
    </cofactor>
</comment>
<comment type="biophysicochemical properties">
    <kinetics>
        <KM evidence="3">7.6 uM for (2E,6E)-farnesyl diphosphate</KM>
        <KM evidence="3">1.5 uM for geranyl diphosphate</KM>
    </kinetics>
</comment>
<comment type="similarity">
    <text evidence="5">Belongs to the trichodiene synthase family.</text>
</comment>
<proteinExistence type="evidence at protein level"/>
<protein>
    <recommendedName>
        <fullName evidence="4">Alpha-cuprenene synthase COP6</fullName>
        <ecNumber evidence="2 3">4.2.3.-</ecNumber>
    </recommendedName>
    <alternativeName>
        <fullName evidence="4">Sesquiterpene synthase COP6</fullName>
    </alternativeName>
</protein>
<feature type="chain" id="PRO_0000444636" description="Alpha-cuprenene synthase COP6">
    <location>
        <begin position="1"/>
        <end position="325"/>
    </location>
</feature>
<feature type="binding site" evidence="1">
    <location>
        <position position="102"/>
    </location>
    <ligand>
        <name>Mg(2+)</name>
        <dbReference type="ChEBI" id="CHEBI:18420"/>
        <label>1</label>
    </ligand>
</feature>
<feature type="binding site" evidence="1">
    <location>
        <position position="166"/>
    </location>
    <ligand>
        <name>Mg(2+)</name>
        <dbReference type="ChEBI" id="CHEBI:18420"/>
        <label>1</label>
    </ligand>
</feature>
<feature type="binding site" evidence="1">
    <location>
        <position position="224"/>
    </location>
    <ligand>
        <name>Mg(2+)</name>
        <dbReference type="ChEBI" id="CHEBI:18420"/>
        <label>2</label>
    </ligand>
</feature>
<feature type="binding site" evidence="1">
    <location>
        <position position="228"/>
    </location>
    <ligand>
        <name>Mg(2+)</name>
        <dbReference type="ChEBI" id="CHEBI:18420"/>
        <label>2</label>
    </ligand>
</feature>
<feature type="binding site" evidence="1">
    <location>
        <position position="232"/>
    </location>
    <ligand>
        <name>Mg(2+)</name>
        <dbReference type="ChEBI" id="CHEBI:18420"/>
        <label>2</label>
    </ligand>
</feature>
<name>COP6_COPC7</name>
<accession>A8NCK5</accession>
<sequence length="325" mass="37424">MPAALPYNVSRDNKWDIKKIIQDFFKRCDVPYQVIPYDTELWNACLKRAKEKGYPVEPDSPMSLYRSFKVGVVITRTSYGHIQDYEILIWVATFTAFVTYADDAFQEDIQHLHSFARTFLQNEKHEHPVLEAFAQFLRESSIRFSHFVANTVVSSALRFMMSIALEFEGQNVSVSTEAREYPGYIRILSGLSDIYALFAFPMDLPRSTYIQAFPEQIDYINGTNDLLSFYKEELDCETVNFISAAATSQQVSKLEVLRNAAEKAAYSYDVVVNVLKPYPEALAAWKSFARGFCYFHTSSPRYRLGEMFHDFEHDLVCKCASCTEI</sequence>
<organism>
    <name type="scientific">Coprinopsis cinerea (strain Okayama-7 / 130 / ATCC MYA-4618 / FGSC 9003)</name>
    <name type="common">Inky cap fungus</name>
    <name type="synonym">Hormographiella aspergillata</name>
    <dbReference type="NCBI Taxonomy" id="240176"/>
    <lineage>
        <taxon>Eukaryota</taxon>
        <taxon>Fungi</taxon>
        <taxon>Dikarya</taxon>
        <taxon>Basidiomycota</taxon>
        <taxon>Agaricomycotina</taxon>
        <taxon>Agaricomycetes</taxon>
        <taxon>Agaricomycetidae</taxon>
        <taxon>Agaricales</taxon>
        <taxon>Agaricineae</taxon>
        <taxon>Psathyrellaceae</taxon>
        <taxon>Coprinopsis</taxon>
    </lineage>
</organism>
<reference key="1">
    <citation type="journal article" date="2010" name="Proc. Natl. Acad. Sci. U.S.A.">
        <title>Insights into evolution of multicellular fungi from the assembled chromosomes of the mushroom Coprinopsis cinerea (Coprinus cinereus).</title>
        <authorList>
            <person name="Stajich J.E."/>
            <person name="Wilke S.K."/>
            <person name="Ahren D."/>
            <person name="Au C.H."/>
            <person name="Birren B.W."/>
            <person name="Borodovsky M."/>
            <person name="Burns C."/>
            <person name="Canbaeck B."/>
            <person name="Casselton L.A."/>
            <person name="Cheng C.K."/>
            <person name="Deng J."/>
            <person name="Dietrich F.S."/>
            <person name="Fargo D.C."/>
            <person name="Farman M.L."/>
            <person name="Gathman A.C."/>
            <person name="Goldberg J."/>
            <person name="Guigo R."/>
            <person name="Hoegger P.J."/>
            <person name="Hooker J.B."/>
            <person name="Huggins A."/>
            <person name="James T.Y."/>
            <person name="Kamada T."/>
            <person name="Kilaru S."/>
            <person name="Kodira C."/>
            <person name="Kuees U."/>
            <person name="Kupfer D."/>
            <person name="Kwan H.S."/>
            <person name="Lomsadze A."/>
            <person name="Li W."/>
            <person name="Lilly W.W."/>
            <person name="Ma L.-J."/>
            <person name="Mackey A.J."/>
            <person name="Manning G."/>
            <person name="Martin F."/>
            <person name="Muraguchi H."/>
            <person name="Natvig D.O."/>
            <person name="Palmerini H."/>
            <person name="Ramesh M.A."/>
            <person name="Rehmeyer C.J."/>
            <person name="Roe B.A."/>
            <person name="Shenoy N."/>
            <person name="Stanke M."/>
            <person name="Ter-Hovhannisyan V."/>
            <person name="Tunlid A."/>
            <person name="Velagapudi R."/>
            <person name="Vision T.J."/>
            <person name="Zeng Q."/>
            <person name="Zolan M.E."/>
            <person name="Pukkila P.J."/>
        </authorList>
    </citation>
    <scope>NUCLEOTIDE SEQUENCE [LARGE SCALE GENOMIC DNA]</scope>
    <source>
        <strain>Okayama-7 / 130 / ATCC MYA-4618 / FGSC 9003</strain>
    </source>
</reference>
<reference key="2">
    <citation type="journal article" date="2009" name="Mol. Microbiol.">
        <title>Diversity of sesquiterpene synthases in the basidiomycete Coprinus cinereus.</title>
        <authorList>
            <person name="Agger S."/>
            <person name="Lopez-Gallego F."/>
            <person name="Schmidt-Dannert C."/>
        </authorList>
    </citation>
    <scope>FUNCTION</scope>
    <scope>CATALYTIC ACTIVITY</scope>
</reference>
<reference key="3">
    <citation type="journal article" date="2010" name="ChemBioChem">
        <title>Sesquiterpene synthases Cop4 and Cop6 from Coprinus cinereus: catalytic promiscuity and cyclization of farnesyl pyrophosphate geometric isomers.</title>
        <authorList>
            <person name="Lopez-Gallego F."/>
            <person name="Agger S.A."/>
            <person name="Abate-Pella D."/>
            <person name="Distefano M.D."/>
            <person name="Schmidt-Dannert C."/>
        </authorList>
    </citation>
    <scope>FUNCTION</scope>
    <scope>CATALYTIC ACTIVITY</scope>
    <scope>BIOPHYSICOCHEMICAL PROPERTIES</scope>
</reference>